<reference key="1">
    <citation type="journal article" date="1995" name="Science">
        <title>The minimal gene complement of Mycoplasma genitalium.</title>
        <authorList>
            <person name="Fraser C.M."/>
            <person name="Gocayne J.D."/>
            <person name="White O."/>
            <person name="Adams M.D."/>
            <person name="Clayton R.A."/>
            <person name="Fleischmann R.D."/>
            <person name="Bult C.J."/>
            <person name="Kerlavage A.R."/>
            <person name="Sutton G.G."/>
            <person name="Kelley J.M."/>
            <person name="Fritchman J.L."/>
            <person name="Weidman J.F."/>
            <person name="Small K.V."/>
            <person name="Sandusky M."/>
            <person name="Fuhrmann J.L."/>
            <person name="Nguyen D.T."/>
            <person name="Utterback T.R."/>
            <person name="Saudek D.M."/>
            <person name="Phillips C.A."/>
            <person name="Merrick J.M."/>
            <person name="Tomb J.-F."/>
            <person name="Dougherty B.A."/>
            <person name="Bott K.F."/>
            <person name="Hu P.-C."/>
            <person name="Lucier T.S."/>
            <person name="Peterson S.N."/>
            <person name="Smith H.O."/>
            <person name="Hutchison C.A. III"/>
            <person name="Venter J.C."/>
        </authorList>
    </citation>
    <scope>NUCLEOTIDE SEQUENCE [LARGE SCALE GENOMIC DNA]</scope>
    <source>
        <strain>ATCC 33530 / DSM 19775 / NCTC 10195 / G37</strain>
    </source>
</reference>
<reference key="2">
    <citation type="journal article" date="1993" name="J. Bacteriol.">
        <title>A survey of the Mycoplasma genitalium genome by using random sequencing.</title>
        <authorList>
            <person name="Peterson S.N."/>
            <person name="Hu P.-C."/>
            <person name="Bott K.F."/>
            <person name="Hutchison C.A. III"/>
        </authorList>
    </citation>
    <scope>NUCLEOTIDE SEQUENCE [GENOMIC DNA] OF 86-182</scope>
    <source>
        <strain>ATCC 33530 / DSM 19775 / NCTC 10195 / G37</strain>
    </source>
</reference>
<organism>
    <name type="scientific">Mycoplasma genitalium (strain ATCC 33530 / DSM 19775 / NCTC 10195 / G37)</name>
    <name type="common">Mycoplasmoides genitalium</name>
    <dbReference type="NCBI Taxonomy" id="243273"/>
    <lineage>
        <taxon>Bacteria</taxon>
        <taxon>Bacillati</taxon>
        <taxon>Mycoplasmatota</taxon>
        <taxon>Mycoplasmoidales</taxon>
        <taxon>Mycoplasmoidaceae</taxon>
        <taxon>Mycoplasmoides</taxon>
    </lineage>
</organism>
<accession>P47694</accession>
<accession>Q49238</accession>
<comment type="subcellular location">
    <subcellularLocation>
        <location evidence="3">Cell membrane</location>
        <topology evidence="3">Multi-pass membrane protein</topology>
    </subcellularLocation>
</comment>
<feature type="chain" id="PRO_0000210625" description="Uncharacterized protein MG456">
    <location>
        <begin position="1"/>
        <end position="334"/>
    </location>
</feature>
<feature type="transmembrane region" description="Helical" evidence="1">
    <location>
        <begin position="19"/>
        <end position="39"/>
    </location>
</feature>
<feature type="transmembrane region" description="Helical" evidence="1">
    <location>
        <begin position="55"/>
        <end position="75"/>
    </location>
</feature>
<feature type="region of interest" description="Disordered" evidence="2">
    <location>
        <begin position="308"/>
        <end position="334"/>
    </location>
</feature>
<feature type="compositionally biased region" description="Basic and acidic residues" evidence="2">
    <location>
        <begin position="319"/>
        <end position="334"/>
    </location>
</feature>
<feature type="sequence conflict" description="In Ref. 2." evidence="3" ref="2">
    <original>F</original>
    <variation>S</variation>
    <location>
        <position position="181"/>
    </location>
</feature>
<keyword id="KW-1003">Cell membrane</keyword>
<keyword id="KW-0472">Membrane</keyword>
<keyword id="KW-1185">Reference proteome</keyword>
<keyword id="KW-0812">Transmembrane</keyword>
<keyword id="KW-1133">Transmembrane helix</keyword>
<proteinExistence type="predicted"/>
<name>Y456_MYCGE</name>
<evidence type="ECO:0000255" key="1"/>
<evidence type="ECO:0000256" key="2">
    <source>
        <dbReference type="SAM" id="MobiDB-lite"/>
    </source>
</evidence>
<evidence type="ECO:0000305" key="3"/>
<sequence length="334" mass="38354">MSDLTKFNKFFLTPNKLNAFLRVIGLCGLFSVIAISFGIYSYTRNEIPNIASLFLIVLGSVVLFLAFVIHFAALFKRNKLLKKVNKENRTNLWQKEMGNFKAIESFEFFEQGPISSDILPSFYPTALYNFEPLPRQFKVTYKDGSEFVFGHIYAIKRSSNKTEKVACLIAITPAINSENHFFLTDANYSLNKNVAQFEALTENKKQENISLFVEKDSNFSFQNLDTEVLNKVLFNPLNVYAKFNVYNDTVHTYLFMSVPTTFMDTKLKVNEAFDDLVTNIKLQASYDFKTLNSMQKVVDLLHNKLIKKPESKSSSQKSVETEIEKEVKDKLAKN</sequence>
<gene>
    <name type="ordered locus">MG456</name>
</gene>
<protein>
    <recommendedName>
        <fullName>Uncharacterized protein MG456</fullName>
    </recommendedName>
</protein>
<dbReference type="EMBL" id="L43967">
    <property type="protein sequence ID" value="AAC72476.1"/>
    <property type="molecule type" value="Genomic_DNA"/>
</dbReference>
<dbReference type="EMBL" id="U01790">
    <property type="protein sequence ID" value="AAD10612.1"/>
    <property type="molecule type" value="Genomic_DNA"/>
</dbReference>
<dbReference type="PIR" id="D64250">
    <property type="entry name" value="D64250"/>
</dbReference>
<dbReference type="RefSeq" id="WP_009885577.1">
    <property type="nucleotide sequence ID" value="NC_000908.2"/>
</dbReference>
<dbReference type="SMR" id="P47694"/>
<dbReference type="GeneID" id="88282636"/>
<dbReference type="KEGG" id="mge:MG_456"/>
<dbReference type="eggNOG" id="ENOG5030N7H">
    <property type="taxonomic scope" value="Bacteria"/>
</dbReference>
<dbReference type="HOGENOM" id="CLU_831109_0_0_14"/>
<dbReference type="InParanoid" id="P47694"/>
<dbReference type="OrthoDB" id="9959548at2"/>
<dbReference type="BioCyc" id="MGEN243273:G1GJ2-549-MONOMER"/>
<dbReference type="Proteomes" id="UP000000807">
    <property type="component" value="Chromosome"/>
</dbReference>
<dbReference type="GO" id="GO:0005886">
    <property type="term" value="C:plasma membrane"/>
    <property type="evidence" value="ECO:0007669"/>
    <property type="project" value="UniProtKB-SubCell"/>
</dbReference>